<reference key="1">
    <citation type="journal article" date="2009" name="Appl. Environ. Microbiol.">
        <title>Rhizobium sp. strain NGR234 possesses a remarkable number of secretion systems.</title>
        <authorList>
            <person name="Schmeisser C."/>
            <person name="Liesegang H."/>
            <person name="Krysciak D."/>
            <person name="Bakkou N."/>
            <person name="Le Quere A."/>
            <person name="Wollherr A."/>
            <person name="Heinemeyer I."/>
            <person name="Morgenstern B."/>
            <person name="Pommerening-Roeser A."/>
            <person name="Flores M."/>
            <person name="Palacios R."/>
            <person name="Brenner S."/>
            <person name="Gottschalk G."/>
            <person name="Schmitz R.A."/>
            <person name="Broughton W.J."/>
            <person name="Perret X."/>
            <person name="Strittmatter A.W."/>
            <person name="Streit W.R."/>
        </authorList>
    </citation>
    <scope>NUCLEOTIDE SEQUENCE [LARGE SCALE GENOMIC DNA]</scope>
    <source>
        <strain>NBRC 101917 / NGR234</strain>
    </source>
</reference>
<name>TRUA_SINFN</name>
<evidence type="ECO:0000255" key="1">
    <source>
        <dbReference type="HAMAP-Rule" id="MF_00171"/>
    </source>
</evidence>
<proteinExistence type="inferred from homology"/>
<dbReference type="EC" id="5.4.99.12" evidence="1"/>
<dbReference type="EMBL" id="CP001389">
    <property type="protein sequence ID" value="ACP23863.1"/>
    <property type="molecule type" value="Genomic_DNA"/>
</dbReference>
<dbReference type="RefSeq" id="WP_012706648.1">
    <property type="nucleotide sequence ID" value="NC_012587.1"/>
</dbReference>
<dbReference type="RefSeq" id="YP_002824616.1">
    <property type="nucleotide sequence ID" value="NC_012587.1"/>
</dbReference>
<dbReference type="SMR" id="C3MF26"/>
<dbReference type="STRING" id="394.NGR_c00590"/>
<dbReference type="KEGG" id="rhi:NGR_c00590"/>
<dbReference type="PATRIC" id="fig|394.7.peg.2852"/>
<dbReference type="eggNOG" id="COG0101">
    <property type="taxonomic scope" value="Bacteria"/>
</dbReference>
<dbReference type="HOGENOM" id="CLU_014673_0_2_5"/>
<dbReference type="OrthoDB" id="9811823at2"/>
<dbReference type="Proteomes" id="UP000001054">
    <property type="component" value="Chromosome"/>
</dbReference>
<dbReference type="GO" id="GO:0003723">
    <property type="term" value="F:RNA binding"/>
    <property type="evidence" value="ECO:0007669"/>
    <property type="project" value="InterPro"/>
</dbReference>
<dbReference type="GO" id="GO:0160147">
    <property type="term" value="F:tRNA pseudouridine(38-40) synthase activity"/>
    <property type="evidence" value="ECO:0007669"/>
    <property type="project" value="UniProtKB-EC"/>
</dbReference>
<dbReference type="GO" id="GO:0031119">
    <property type="term" value="P:tRNA pseudouridine synthesis"/>
    <property type="evidence" value="ECO:0007669"/>
    <property type="project" value="UniProtKB-UniRule"/>
</dbReference>
<dbReference type="CDD" id="cd02570">
    <property type="entry name" value="PseudoU_synth_EcTruA"/>
    <property type="match status" value="1"/>
</dbReference>
<dbReference type="FunFam" id="3.30.70.580:FF:000001">
    <property type="entry name" value="tRNA pseudouridine synthase A"/>
    <property type="match status" value="1"/>
</dbReference>
<dbReference type="Gene3D" id="3.30.70.660">
    <property type="entry name" value="Pseudouridine synthase I, catalytic domain, C-terminal subdomain"/>
    <property type="match status" value="1"/>
</dbReference>
<dbReference type="Gene3D" id="3.30.70.580">
    <property type="entry name" value="Pseudouridine synthase I, catalytic domain, N-terminal subdomain"/>
    <property type="match status" value="1"/>
</dbReference>
<dbReference type="HAMAP" id="MF_00171">
    <property type="entry name" value="TruA"/>
    <property type="match status" value="1"/>
</dbReference>
<dbReference type="InterPro" id="IPR020103">
    <property type="entry name" value="PsdUridine_synth_cat_dom_sf"/>
</dbReference>
<dbReference type="InterPro" id="IPR001406">
    <property type="entry name" value="PsdUridine_synth_TruA"/>
</dbReference>
<dbReference type="InterPro" id="IPR020097">
    <property type="entry name" value="PsdUridine_synth_TruA_a/b_dom"/>
</dbReference>
<dbReference type="InterPro" id="IPR020095">
    <property type="entry name" value="PsdUridine_synth_TruA_C"/>
</dbReference>
<dbReference type="InterPro" id="IPR020094">
    <property type="entry name" value="TruA/RsuA/RluB/E/F_N"/>
</dbReference>
<dbReference type="NCBIfam" id="TIGR00071">
    <property type="entry name" value="hisT_truA"/>
    <property type="match status" value="1"/>
</dbReference>
<dbReference type="PANTHER" id="PTHR11142">
    <property type="entry name" value="PSEUDOURIDYLATE SYNTHASE"/>
    <property type="match status" value="1"/>
</dbReference>
<dbReference type="PANTHER" id="PTHR11142:SF0">
    <property type="entry name" value="TRNA PSEUDOURIDINE SYNTHASE-LIKE 1"/>
    <property type="match status" value="1"/>
</dbReference>
<dbReference type="Pfam" id="PF01416">
    <property type="entry name" value="PseudoU_synth_1"/>
    <property type="match status" value="2"/>
</dbReference>
<dbReference type="PIRSF" id="PIRSF001430">
    <property type="entry name" value="tRNA_psdUrid_synth"/>
    <property type="match status" value="1"/>
</dbReference>
<dbReference type="SUPFAM" id="SSF55120">
    <property type="entry name" value="Pseudouridine synthase"/>
    <property type="match status" value="1"/>
</dbReference>
<keyword id="KW-0413">Isomerase</keyword>
<keyword id="KW-1185">Reference proteome</keyword>
<keyword id="KW-0819">tRNA processing</keyword>
<gene>
    <name evidence="1" type="primary">truA</name>
    <name type="ordered locus">NGR_c00590</name>
</gene>
<protein>
    <recommendedName>
        <fullName evidence="1">tRNA pseudouridine synthase A</fullName>
        <ecNumber evidence="1">5.4.99.12</ecNumber>
    </recommendedName>
    <alternativeName>
        <fullName evidence="1">tRNA pseudouridine(38-40) synthase</fullName>
    </alternativeName>
    <alternativeName>
        <fullName evidence="1">tRNA pseudouridylate synthase I</fullName>
    </alternativeName>
    <alternativeName>
        <fullName evidence="1">tRNA-uridine isomerase I</fullName>
    </alternativeName>
</protein>
<comment type="function">
    <text evidence="1">Formation of pseudouridine at positions 38, 39 and 40 in the anticodon stem and loop of transfer RNAs.</text>
</comment>
<comment type="catalytic activity">
    <reaction evidence="1">
        <text>uridine(38/39/40) in tRNA = pseudouridine(38/39/40) in tRNA</text>
        <dbReference type="Rhea" id="RHEA:22376"/>
        <dbReference type="Rhea" id="RHEA-COMP:10085"/>
        <dbReference type="Rhea" id="RHEA-COMP:10087"/>
        <dbReference type="ChEBI" id="CHEBI:65314"/>
        <dbReference type="ChEBI" id="CHEBI:65315"/>
        <dbReference type="EC" id="5.4.99.12"/>
    </reaction>
</comment>
<comment type="subunit">
    <text evidence="1">Homodimer.</text>
</comment>
<comment type="similarity">
    <text evidence="1">Belongs to the tRNA pseudouridine synthase TruA family.</text>
</comment>
<accession>C3MF26</accession>
<sequence length="247" mass="27728">MPRYRLTVEYDGSDYVGWQRQENGPSVQGAIEKAVLSLTGETVSIRGAGRTDSGVHAMGQVAHLDLTREWKTHTLRNALNAHLALAAERVSILDAAEVPPEFDARFSAIRRHYLYRIISRRSPLALEARRAWWVPKTLDHEAMHEAAQHLVGHHDFTTFRSAHCQANSPLRTIDRLDVTRSGELIEIRATAQSFLHNQIRSFAGSLKLVGEGKWTPDDLKTALEARDRKACGPVAPPEGLFFMQVDY</sequence>
<organism>
    <name type="scientific">Sinorhizobium fredii (strain NBRC 101917 / NGR234)</name>
    <dbReference type="NCBI Taxonomy" id="394"/>
    <lineage>
        <taxon>Bacteria</taxon>
        <taxon>Pseudomonadati</taxon>
        <taxon>Pseudomonadota</taxon>
        <taxon>Alphaproteobacteria</taxon>
        <taxon>Hyphomicrobiales</taxon>
        <taxon>Rhizobiaceae</taxon>
        <taxon>Sinorhizobium/Ensifer group</taxon>
        <taxon>Sinorhizobium</taxon>
    </lineage>
</organism>
<feature type="chain" id="PRO_1000123762" description="tRNA pseudouridine synthase A">
    <location>
        <begin position="1"/>
        <end position="247"/>
    </location>
</feature>
<feature type="active site" description="Nucleophile" evidence="1">
    <location>
        <position position="52"/>
    </location>
</feature>
<feature type="binding site" evidence="1">
    <location>
        <position position="113"/>
    </location>
    <ligand>
        <name>substrate</name>
    </ligand>
</feature>